<keyword id="KW-0150">Chloroplast</keyword>
<keyword id="KW-0472">Membrane</keyword>
<keyword id="KW-0602">Photosynthesis</keyword>
<keyword id="KW-0603">Photosystem I</keyword>
<keyword id="KW-0934">Plastid</keyword>
<keyword id="KW-0793">Thylakoid</keyword>
<keyword id="KW-0812">Transmembrane</keyword>
<keyword id="KW-1133">Transmembrane helix</keyword>
<protein>
    <recommendedName>
        <fullName evidence="1">Photosystem I reaction center subunit VIII</fullName>
        <shortName evidence="1">PSI-I</shortName>
    </recommendedName>
</protein>
<comment type="function">
    <text evidence="1">May help in the organization of the PsaL subunit.</text>
</comment>
<comment type="subcellular location">
    <subcellularLocation>
        <location evidence="1">Plastid</location>
        <location evidence="1">Chloroplast thylakoid membrane</location>
        <topology evidence="1">Single-pass membrane protein</topology>
    </subcellularLocation>
</comment>
<comment type="similarity">
    <text evidence="1">Belongs to the PsaI family.</text>
</comment>
<feature type="chain" id="PRO_0000194673" description="Photosystem I reaction center subunit VIII">
    <location>
        <begin position="1"/>
        <end position="36"/>
    </location>
</feature>
<feature type="transmembrane region" description="Helical" evidence="1">
    <location>
        <begin position="7"/>
        <end position="29"/>
    </location>
</feature>
<sequence>MTASYLPSIFVPLVGLVFPAITMASLFIYIEQDEIV</sequence>
<accession>Q8WI10</accession>
<gene>
    <name evidence="1" type="primary">psaI</name>
</gene>
<geneLocation type="chloroplast"/>
<proteinExistence type="inferred from homology"/>
<evidence type="ECO:0000255" key="1">
    <source>
        <dbReference type="HAMAP-Rule" id="MF_00431"/>
    </source>
</evidence>
<reference key="1">
    <citation type="journal article" date="2004" name="Mol. Biol. Evol.">
        <title>Chloroplast phylogeny indicates that bryophytes are monophyletic.</title>
        <authorList>
            <person name="Nishiyama T."/>
            <person name="Wolf P.G."/>
            <person name="Kugita M."/>
            <person name="Sinclair R.B."/>
            <person name="Sugita M."/>
            <person name="Sugiura C."/>
            <person name="Wakasugi T."/>
            <person name="Yamada K."/>
            <person name="Yoshinaga K."/>
            <person name="Yamaguchi K."/>
            <person name="Ueda K."/>
            <person name="Hasebe M."/>
        </authorList>
    </citation>
    <scope>NUCLEOTIDE SEQUENCE [LARGE SCALE GENOMIC DNA]</scope>
    <source>
        <strain>Kingyoku</strain>
    </source>
</reference>
<name>PSAI_PSINU</name>
<organism>
    <name type="scientific">Psilotum nudum</name>
    <name type="common">Whisk fern</name>
    <name type="synonym">Lycopodium nudum</name>
    <dbReference type="NCBI Taxonomy" id="3240"/>
    <lineage>
        <taxon>Eukaryota</taxon>
        <taxon>Viridiplantae</taxon>
        <taxon>Streptophyta</taxon>
        <taxon>Embryophyta</taxon>
        <taxon>Tracheophyta</taxon>
        <taxon>Polypodiopsida</taxon>
        <taxon>Ophioglossidae</taxon>
        <taxon>Psilotales</taxon>
        <taxon>Psilotaceae</taxon>
        <taxon>Psilotum</taxon>
    </lineage>
</organism>
<dbReference type="EMBL" id="AP004638">
    <property type="protein sequence ID" value="BAB84226.1"/>
    <property type="molecule type" value="Genomic_DNA"/>
</dbReference>
<dbReference type="RefSeq" id="NP_569639.1">
    <property type="nucleotide sequence ID" value="NC_003386.1"/>
</dbReference>
<dbReference type="SMR" id="Q8WI10"/>
<dbReference type="GeneID" id="2545136"/>
<dbReference type="GO" id="GO:0009535">
    <property type="term" value="C:chloroplast thylakoid membrane"/>
    <property type="evidence" value="ECO:0007669"/>
    <property type="project" value="UniProtKB-SubCell"/>
</dbReference>
<dbReference type="GO" id="GO:0009522">
    <property type="term" value="C:photosystem I"/>
    <property type="evidence" value="ECO:0007669"/>
    <property type="project" value="UniProtKB-KW"/>
</dbReference>
<dbReference type="GO" id="GO:0015979">
    <property type="term" value="P:photosynthesis"/>
    <property type="evidence" value="ECO:0007669"/>
    <property type="project" value="UniProtKB-UniRule"/>
</dbReference>
<dbReference type="HAMAP" id="MF_00431">
    <property type="entry name" value="PSI_PsaI"/>
    <property type="match status" value="1"/>
</dbReference>
<dbReference type="InterPro" id="IPR001302">
    <property type="entry name" value="PSI_PsaI"/>
</dbReference>
<dbReference type="InterPro" id="IPR036357">
    <property type="entry name" value="PSI_PsaI_sf"/>
</dbReference>
<dbReference type="NCBIfam" id="NF008830">
    <property type="entry name" value="PRK11877.1"/>
    <property type="match status" value="1"/>
</dbReference>
<dbReference type="NCBIfam" id="TIGR03052">
    <property type="entry name" value="PS_I_psaI"/>
    <property type="match status" value="1"/>
</dbReference>
<dbReference type="PANTHER" id="PTHR35775">
    <property type="match status" value="1"/>
</dbReference>
<dbReference type="PANTHER" id="PTHR35775:SF2">
    <property type="entry name" value="PHOTOSYSTEM I REACTION CENTER SUBUNIT VIII"/>
    <property type="match status" value="1"/>
</dbReference>
<dbReference type="Pfam" id="PF00796">
    <property type="entry name" value="PSI_8"/>
    <property type="match status" value="1"/>
</dbReference>
<dbReference type="SUPFAM" id="SSF81540">
    <property type="entry name" value="Subunit VIII of photosystem I reaction centre, PsaI"/>
    <property type="match status" value="1"/>
</dbReference>